<proteinExistence type="inferred from homology"/>
<protein>
    <recommendedName>
        <fullName evidence="2">3-oxoacyl-[acyl-carrier-protein] reductase MabA</fullName>
        <ecNumber evidence="2">1.1.1.100</ecNumber>
    </recommendedName>
    <alternativeName>
        <fullName evidence="2">3-ketoacyl-acyl carrier protein reductase</fullName>
    </alternativeName>
    <alternativeName>
        <fullName evidence="2">Beta-ketoacyl-ACP reductase</fullName>
    </alternativeName>
    <alternativeName>
        <fullName evidence="2">Beta-ketoacyl-acyl carrier protein reductase</fullName>
    </alternativeName>
</protein>
<sequence>MTDTATENTTESAADYGRPAFVSRSVLVTGGNRGIGLAIAQRLAAEAHKVAVTHRGSGAPDGLFGVECDVTDNDAVDRAFTEVEEHQGPVEVLVSNAGISKDAFLIRMTEERFTEVINANLTGAFRVTQRAARSMQKKRFGRIIYIGSVSGMWGIGNQANYAAAKAGLIGMARSISRELSKAGVTANVVAPGYIDTEMTRALDERIQAGALEFIPAKRVGTAAEVPGAVSFLASEDASYIAGAVIPVDGGMGMGH</sequence>
<organism>
    <name type="scientific">Mycobacterium avium</name>
    <dbReference type="NCBI Taxonomy" id="1764"/>
    <lineage>
        <taxon>Bacteria</taxon>
        <taxon>Bacillati</taxon>
        <taxon>Actinomycetota</taxon>
        <taxon>Actinomycetes</taxon>
        <taxon>Mycobacteriales</taxon>
        <taxon>Mycobacteriaceae</taxon>
        <taxon>Mycobacterium</taxon>
        <taxon>Mycobacterium avium complex (MAC)</taxon>
    </lineage>
</organism>
<gene>
    <name evidence="2" type="primary">mabA</name>
    <name type="synonym">fabG</name>
</gene>
<comment type="function">
    <text evidence="2">Part of the mycobacterial fatty acid elongation system FAS-II, which is involved in mycolic acid biosynthesis. Catalyzes the NADPH-dependent reduction of beta-ketoacyl derivatives, the second step of the FAS-II elongation cycle.</text>
</comment>
<comment type="catalytic activity">
    <reaction evidence="2">
        <text>a (3R)-hydroxyacyl-[ACP] + NADP(+) = a 3-oxoacyl-[ACP] + NADPH + H(+)</text>
        <dbReference type="Rhea" id="RHEA:17397"/>
        <dbReference type="Rhea" id="RHEA-COMP:9916"/>
        <dbReference type="Rhea" id="RHEA-COMP:9945"/>
        <dbReference type="ChEBI" id="CHEBI:15378"/>
        <dbReference type="ChEBI" id="CHEBI:57783"/>
        <dbReference type="ChEBI" id="CHEBI:58349"/>
        <dbReference type="ChEBI" id="CHEBI:78776"/>
        <dbReference type="ChEBI" id="CHEBI:78827"/>
        <dbReference type="EC" id="1.1.1.100"/>
    </reaction>
    <physiologicalReaction direction="right-to-left" evidence="2">
        <dbReference type="Rhea" id="RHEA:17399"/>
    </physiologicalReaction>
</comment>
<comment type="pathway">
    <text evidence="2">Lipid metabolism; mycolic acid biosynthesis.</text>
</comment>
<comment type="subunit">
    <text evidence="2">Homotetramer.</text>
</comment>
<comment type="subcellular location">
    <subcellularLocation>
        <location evidence="2">Secreted</location>
        <location evidence="2">Cell wall</location>
    </subcellularLocation>
</comment>
<comment type="similarity">
    <text evidence="4">Belongs to the short-chain dehydrogenases/reductases (SDR) family.</text>
</comment>
<keyword id="KW-0134">Cell wall</keyword>
<keyword id="KW-0275">Fatty acid biosynthesis</keyword>
<keyword id="KW-0276">Fatty acid metabolism</keyword>
<keyword id="KW-0444">Lipid biosynthesis</keyword>
<keyword id="KW-0443">Lipid metabolism</keyword>
<keyword id="KW-0521">NADP</keyword>
<keyword id="KW-0560">Oxidoreductase</keyword>
<keyword id="KW-0964">Secreted</keyword>
<dbReference type="EC" id="1.1.1.100" evidence="2"/>
<dbReference type="EMBL" id="AF002133">
    <property type="protein sequence ID" value="AAC46203.1"/>
    <property type="molecule type" value="Genomic_DNA"/>
</dbReference>
<dbReference type="SMR" id="O07399"/>
<dbReference type="UniPathway" id="UPA00915"/>
<dbReference type="GO" id="GO:0005576">
    <property type="term" value="C:extracellular region"/>
    <property type="evidence" value="ECO:0007669"/>
    <property type="project" value="UniProtKB-KW"/>
</dbReference>
<dbReference type="GO" id="GO:0004316">
    <property type="term" value="F:3-oxoacyl-[acyl-carrier-protein] reductase (NADPH) activity"/>
    <property type="evidence" value="ECO:0000250"/>
    <property type="project" value="UniProtKB"/>
</dbReference>
<dbReference type="GO" id="GO:0050661">
    <property type="term" value="F:NADP binding"/>
    <property type="evidence" value="ECO:0000250"/>
    <property type="project" value="UniProtKB"/>
</dbReference>
<dbReference type="GO" id="GO:0030497">
    <property type="term" value="P:fatty acid elongation"/>
    <property type="evidence" value="ECO:0000250"/>
    <property type="project" value="UniProtKB"/>
</dbReference>
<dbReference type="FunFam" id="3.40.50.720:FF:000460">
    <property type="entry name" value="3-oxoacyl-[acyl-carrier-protein] reductase FabG1"/>
    <property type="match status" value="1"/>
</dbReference>
<dbReference type="Gene3D" id="3.40.50.720">
    <property type="entry name" value="NAD(P)-binding Rossmann-like Domain"/>
    <property type="match status" value="1"/>
</dbReference>
<dbReference type="InterPro" id="IPR036291">
    <property type="entry name" value="NAD(P)-bd_dom_sf"/>
</dbReference>
<dbReference type="InterPro" id="IPR020904">
    <property type="entry name" value="Sc_DH/Rdtase_CS"/>
</dbReference>
<dbReference type="InterPro" id="IPR050259">
    <property type="entry name" value="SDR"/>
</dbReference>
<dbReference type="InterPro" id="IPR002347">
    <property type="entry name" value="SDR_fam"/>
</dbReference>
<dbReference type="NCBIfam" id="NF009466">
    <property type="entry name" value="PRK12826.1-2"/>
    <property type="match status" value="1"/>
</dbReference>
<dbReference type="PANTHER" id="PTHR42879">
    <property type="entry name" value="3-OXOACYL-(ACYL-CARRIER-PROTEIN) REDUCTASE"/>
    <property type="match status" value="1"/>
</dbReference>
<dbReference type="PANTHER" id="PTHR42879:SF2">
    <property type="entry name" value="3-OXOACYL-[ACYL-CARRIER-PROTEIN] REDUCTASE FABG"/>
    <property type="match status" value="1"/>
</dbReference>
<dbReference type="Pfam" id="PF13561">
    <property type="entry name" value="adh_short_C2"/>
    <property type="match status" value="1"/>
</dbReference>
<dbReference type="PRINTS" id="PR00081">
    <property type="entry name" value="GDHRDH"/>
</dbReference>
<dbReference type="PRINTS" id="PR00080">
    <property type="entry name" value="SDRFAMILY"/>
</dbReference>
<dbReference type="SMART" id="SM00822">
    <property type="entry name" value="PKS_KR"/>
    <property type="match status" value="1"/>
</dbReference>
<dbReference type="SUPFAM" id="SSF51735">
    <property type="entry name" value="NAD(P)-binding Rossmann-fold domains"/>
    <property type="match status" value="1"/>
</dbReference>
<dbReference type="PROSITE" id="PS00061">
    <property type="entry name" value="ADH_SHORT"/>
    <property type="match status" value="1"/>
</dbReference>
<feature type="chain" id="PRO_0000054675" description="3-oxoacyl-[acyl-carrier-protein] reductase MabA">
    <location>
        <begin position="1"/>
        <end position="255"/>
    </location>
</feature>
<feature type="active site" description="Proton acceptor" evidence="3">
    <location>
        <position position="161"/>
    </location>
</feature>
<feature type="binding site" evidence="2">
    <location>
        <begin position="33"/>
        <end position="35"/>
    </location>
    <ligand>
        <name>NADP(+)</name>
        <dbReference type="ChEBI" id="CHEBI:58349"/>
    </ligand>
</feature>
<feature type="binding site" evidence="2">
    <location>
        <position position="55"/>
    </location>
    <ligand>
        <name>NADP(+)</name>
        <dbReference type="ChEBI" id="CHEBI:58349"/>
    </ligand>
</feature>
<feature type="binding site" evidence="2">
    <location>
        <begin position="69"/>
        <end position="70"/>
    </location>
    <ligand>
        <name>NADP(+)</name>
        <dbReference type="ChEBI" id="CHEBI:58349"/>
    </ligand>
</feature>
<feature type="binding site" evidence="2">
    <location>
        <position position="98"/>
    </location>
    <ligand>
        <name>NADP(+)</name>
        <dbReference type="ChEBI" id="CHEBI:58349"/>
    </ligand>
</feature>
<feature type="binding site" evidence="1">
    <location>
        <position position="161"/>
    </location>
    <ligand>
        <name>NADP(+)</name>
        <dbReference type="ChEBI" id="CHEBI:58349"/>
    </ligand>
</feature>
<feature type="binding site" evidence="1">
    <location>
        <position position="165"/>
    </location>
    <ligand>
        <name>NADP(+)</name>
        <dbReference type="ChEBI" id="CHEBI:58349"/>
    </ligand>
</feature>
<feature type="binding site" evidence="1">
    <location>
        <position position="194"/>
    </location>
    <ligand>
        <name>NADP(+)</name>
        <dbReference type="ChEBI" id="CHEBI:58349"/>
    </ligand>
</feature>
<feature type="binding site" evidence="1">
    <location>
        <position position="205"/>
    </location>
    <ligand>
        <name>NADP(+)</name>
        <dbReference type="ChEBI" id="CHEBI:58349"/>
    </ligand>
</feature>
<feature type="site" description="Important for activity" evidence="2">
    <location>
        <position position="148"/>
    </location>
</feature>
<reference key="1">
    <citation type="journal article" date="1998" name="Microbiology">
        <title>Determination of a 15437 bp nucleotide sequence around the inhA gene of Mycobacterium avium and similarity analysis of the products of putative ORFs.</title>
        <authorList>
            <person name="Labo M."/>
            <person name="Gusberti L."/>
            <person name="de Rossi E."/>
            <person name="Speziale P."/>
            <person name="Riccardi G."/>
        </authorList>
    </citation>
    <scope>NUCLEOTIDE SEQUENCE [GENOMIC DNA]</scope>
    <source>
        <strain>GIR10</strain>
    </source>
</reference>
<accession>O07399</accession>
<evidence type="ECO:0000250" key="1">
    <source>
        <dbReference type="UniProtKB" id="P71534"/>
    </source>
</evidence>
<evidence type="ECO:0000250" key="2">
    <source>
        <dbReference type="UniProtKB" id="P9WGT3"/>
    </source>
</evidence>
<evidence type="ECO:0000255" key="3">
    <source>
        <dbReference type="PROSITE-ProRule" id="PRU10001"/>
    </source>
</evidence>
<evidence type="ECO:0000305" key="4"/>
<name>MABA_MYCAV</name>